<protein>
    <recommendedName>
        <fullName>Exo-alpha-(1-&gt;6)-L-arabinopyranosidase</fullName>
        <shortName>APY</shortName>
        <ecNumber>3.2.1.-</ecNumber>
    </recommendedName>
    <alternativeName>
        <fullName>Beta-D-galactopyranosidase</fullName>
    </alternativeName>
</protein>
<proteinExistence type="evidence at protein level"/>
<evidence type="ECO:0000250" key="1"/>
<evidence type="ECO:0000269" key="2">
    <source>
    </source>
</evidence>
<evidence type="ECO:0000305" key="3"/>
<name>APY_BIFLN</name>
<feature type="chain" id="PRO_0000422132" description="Exo-alpha-(1-&gt;6)-L-arabinopyranosidase">
    <location>
        <begin position="1"/>
        <end position="757"/>
    </location>
</feature>
<feature type="active site" evidence="1">
    <location>
        <position position="232"/>
    </location>
</feature>
<gene>
    <name type="primary">apy</name>
</gene>
<comment type="function">
    <text evidence="2">Catalyzes the hydrolysis of a non-reducing terminal alpha-L-arabinopyranosidic linkage in ginsenoside Rb2 (alpha-L-arabinopyranosyl-(1-&gt;6)-alpha-D-glucopyranosyl) to release alpha-D-glucopyranosyl (Rd). It is not able to hydrolyze alpha-L-arabinofuranosyl-(1-&gt;6)-alpha-D-glucopyranosyl (Rc).</text>
</comment>
<comment type="activity regulation">
    <text evidence="2">Completely inhibited by Cu(2+) and activated by Co(2+).</text>
</comment>
<comment type="biophysicochemical properties">
    <kinetics>
        <KM evidence="2">0.24 mM for p-nitrophenyl-alpha-L-arabinopyranoside (pNP-aL-Ap)</KM>
        <KM evidence="2">0.26 mM for p-nitrophenyl-beta-D-galactopyranoside (pNP-bD-Ga)</KM>
        <KM evidence="2">1.33 mM for Rb2</KM>
        <Vmax evidence="2">0.21 umol/min/mg enzyme with Rb2 as substrate</Vmax>
        <Vmax evidence="2">10.02 umol/min/mg enzyme with pNP-aL-Ap as substrate</Vmax>
        <Vmax evidence="2">16.5 umol/min/mg enzyme with pNP-bD-Ga as substrate</Vmax>
    </kinetics>
    <phDependence>
        <text evidence="2">Optimum pH is 6.8.</text>
    </phDependence>
    <temperatureDependence>
        <text evidence="2">Optimum temperature is 48 degrees Celsius.</text>
    </temperatureDependence>
</comment>
<comment type="subunit">
    <text evidence="1">Homotetramer.</text>
</comment>
<comment type="similarity">
    <text evidence="3">Belongs to the glycosyl hydrolase 3 family.</text>
</comment>
<reference key="1">
    <citation type="journal article" date="2011" name="J. Appl. Microbiol.">
        <title>Cloning and characterization of alpha-L-arabinofuranosidase and bifunctional alpha-L-arabinopyranosidase/beta-D-galactopyranosidase from Bifidobacterium longum H-1.</title>
        <authorList>
            <person name="Lee J.H."/>
            <person name="Hyun Y.J."/>
            <person name="Kim D.H."/>
        </authorList>
    </citation>
    <scope>NUCLEOTIDE SEQUENCE [GENOMIC DNA]</scope>
    <scope>FUNCTION</scope>
    <scope>ACTIVITY REGULATION</scope>
    <scope>BIOPHYSICOCHEMICAL PROPERTIES</scope>
    <scope>SUBSTRATE SPECIFICITY</scope>
    <scope>NOMENCLATURE</scope>
    <source>
        <strain>H-1</strain>
    </source>
</reference>
<dbReference type="EC" id="3.2.1.-"/>
<dbReference type="EMBL" id="HM803112">
    <property type="protein sequence ID" value="ADT80794.1"/>
    <property type="molecule type" value="Genomic_DNA"/>
</dbReference>
<dbReference type="SMR" id="E7CY69"/>
<dbReference type="CAZy" id="GH3">
    <property type="family name" value="Glycoside Hydrolase Family 3"/>
</dbReference>
<dbReference type="eggNOG" id="COG1472">
    <property type="taxonomic scope" value="Bacteria"/>
</dbReference>
<dbReference type="GO" id="GO:0004553">
    <property type="term" value="F:hydrolase activity, hydrolyzing O-glycosyl compounds"/>
    <property type="evidence" value="ECO:0007669"/>
    <property type="project" value="InterPro"/>
</dbReference>
<dbReference type="GO" id="GO:0005975">
    <property type="term" value="P:carbohydrate metabolic process"/>
    <property type="evidence" value="ECO:0007669"/>
    <property type="project" value="InterPro"/>
</dbReference>
<dbReference type="FunFam" id="2.60.40.10:FF:000495">
    <property type="entry name" value="Periplasmic beta-glucosidase"/>
    <property type="match status" value="1"/>
</dbReference>
<dbReference type="Gene3D" id="3.40.50.1700">
    <property type="entry name" value="Glycoside hydrolase family 3 C-terminal domain"/>
    <property type="match status" value="1"/>
</dbReference>
<dbReference type="Gene3D" id="3.20.20.300">
    <property type="entry name" value="Glycoside hydrolase, family 3, N-terminal domain"/>
    <property type="match status" value="1"/>
</dbReference>
<dbReference type="Gene3D" id="2.60.40.10">
    <property type="entry name" value="Immunoglobulins"/>
    <property type="match status" value="1"/>
</dbReference>
<dbReference type="InterPro" id="IPR048100">
    <property type="entry name" value="Alph_arabinopyran"/>
</dbReference>
<dbReference type="InterPro" id="IPR050288">
    <property type="entry name" value="Cellulose_deg_GH3"/>
</dbReference>
<dbReference type="InterPro" id="IPR026891">
    <property type="entry name" value="Fn3-like"/>
</dbReference>
<dbReference type="InterPro" id="IPR019800">
    <property type="entry name" value="Glyco_hydro_3_AS"/>
</dbReference>
<dbReference type="InterPro" id="IPR002772">
    <property type="entry name" value="Glyco_hydro_3_C"/>
</dbReference>
<dbReference type="InterPro" id="IPR036881">
    <property type="entry name" value="Glyco_hydro_3_C_sf"/>
</dbReference>
<dbReference type="InterPro" id="IPR001764">
    <property type="entry name" value="Glyco_hydro_3_N"/>
</dbReference>
<dbReference type="InterPro" id="IPR036962">
    <property type="entry name" value="Glyco_hydro_3_N_sf"/>
</dbReference>
<dbReference type="InterPro" id="IPR017853">
    <property type="entry name" value="Glycoside_hydrolase_SF"/>
</dbReference>
<dbReference type="InterPro" id="IPR013783">
    <property type="entry name" value="Ig-like_fold"/>
</dbReference>
<dbReference type="NCBIfam" id="NF041610">
    <property type="entry name" value="alph_arabinopyran"/>
    <property type="match status" value="1"/>
</dbReference>
<dbReference type="PANTHER" id="PTHR42715">
    <property type="entry name" value="BETA-GLUCOSIDASE"/>
    <property type="match status" value="1"/>
</dbReference>
<dbReference type="PANTHER" id="PTHR42715:SF10">
    <property type="entry name" value="BETA-GLUCOSIDASE"/>
    <property type="match status" value="1"/>
</dbReference>
<dbReference type="Pfam" id="PF14310">
    <property type="entry name" value="Fn3-like"/>
    <property type="match status" value="1"/>
</dbReference>
<dbReference type="Pfam" id="PF00933">
    <property type="entry name" value="Glyco_hydro_3"/>
    <property type="match status" value="1"/>
</dbReference>
<dbReference type="Pfam" id="PF01915">
    <property type="entry name" value="Glyco_hydro_3_C"/>
    <property type="match status" value="1"/>
</dbReference>
<dbReference type="PRINTS" id="PR00133">
    <property type="entry name" value="GLHYDRLASE3"/>
</dbReference>
<dbReference type="SMART" id="SM01217">
    <property type="entry name" value="Fn3_like"/>
    <property type="match status" value="1"/>
</dbReference>
<dbReference type="SUPFAM" id="SSF51445">
    <property type="entry name" value="(Trans)glycosidases"/>
    <property type="match status" value="1"/>
</dbReference>
<dbReference type="SUPFAM" id="SSF52279">
    <property type="entry name" value="Beta-D-glucan exohydrolase, C-terminal domain"/>
    <property type="match status" value="1"/>
</dbReference>
<dbReference type="PROSITE" id="PS00775">
    <property type="entry name" value="GLYCOSYL_HYDROL_F3"/>
    <property type="match status" value="1"/>
</dbReference>
<organism>
    <name type="scientific">Bifidobacterium longum</name>
    <dbReference type="NCBI Taxonomy" id="216816"/>
    <lineage>
        <taxon>Bacteria</taxon>
        <taxon>Bacillati</taxon>
        <taxon>Actinomycetota</taxon>
        <taxon>Actinomycetes</taxon>
        <taxon>Bifidobacteriales</taxon>
        <taxon>Bifidobacteriaceae</taxon>
        <taxon>Bifidobacterium</taxon>
    </lineage>
</organism>
<sequence length="757" mass="81473">MSESTYPSVKDLTLEEKASLTSGGDAWHLQGVESKGIPSYMITDGPHGLRKSLASSAGETDLDDSVPATCFPPAAGLSSSWNPELIHKVGEAMAEECIQEKVAVILGPGVNIKRNPLGGRCFEYWSEDPYLAGHEAIGIVEGVQSKGVGTSLKHFAANNQETDRLRVDARISPRALREIYFPAFEHIVKKAQPWTIMCSYNRINGVHSAQNHWLLTDVLRDEWGFDGIVMSDWGADHDRGASLNAGLNLEMPPSYTDDQIVYAVRDGLITPAQLDRMAQGMIDLVNKTRAAMSIDNYRFDVDAHDEVAHQAAIESIVMLKNDDAILPLNAGPVANPSATPQKIAVIGEFARTPRYQGGGSSHITPTKMTSFLDTLAERGIKADFAPGFTLDLEPADPALESEAVETAKNADVVLMFLGLPEAVESEGFDRDTLDMPAKQIALLEQVAAANQNVVVVLSNGSVITVAPWAKNAKGILESWLLGQSGGPALADVIFGQVSPSGKLAQSIPLDINDDPSMLNWPGEEGHVDYGEGVFAGYRYYDTYGKAVDYPFGYGLSYATFEITGVAVAKTGANTATVTATVTNTSDVDAAETVQVYVVPGKADVARPKHELKGFTKAFLKAGESKTVAIDLDERAFAYWSEKYNDWHVEAGEYAIEVGVSSRDIADTVAVALDGDGKTQPLTEWSTYGEWEADPFGAKIVAAVAAAGEAGELTKLPDNAMMRMFLNPMPINSLPTLLGEGGKKIAQFMLDEYAKLSK</sequence>
<keyword id="KW-0119">Carbohydrate metabolism</keyword>
<keyword id="KW-0326">Glycosidase</keyword>
<keyword id="KW-0378">Hydrolase</keyword>
<accession>E7CY69</accession>